<protein>
    <recommendedName>
        <fullName evidence="2">Elongation factor Tu</fullName>
        <shortName evidence="2">EF-Tu</shortName>
        <ecNumber evidence="2">3.6.5.3</ecNumber>
    </recommendedName>
</protein>
<gene>
    <name evidence="2" type="primary">tuf</name>
    <name type="synonym">twt120</name>
    <name type="ordered locus">TWT_120</name>
</gene>
<reference key="1">
    <citation type="journal article" date="2003" name="Genome Res.">
        <title>Tropheryma whipplei twist: a human pathogenic Actinobacteria with a reduced genome.</title>
        <authorList>
            <person name="Raoult D."/>
            <person name="Ogata H."/>
            <person name="Audic S."/>
            <person name="Robert C."/>
            <person name="Suhre K."/>
            <person name="Drancourt M."/>
            <person name="Claverie J.-M."/>
        </authorList>
    </citation>
    <scope>NUCLEOTIDE SEQUENCE [LARGE SCALE GENOMIC DNA]</scope>
    <source>
        <strain>Twist</strain>
    </source>
</reference>
<dbReference type="EC" id="3.6.5.3" evidence="2"/>
<dbReference type="EMBL" id="AE014184">
    <property type="protein sequence ID" value="AAO44217.1"/>
    <property type="molecule type" value="Genomic_DNA"/>
</dbReference>
<dbReference type="RefSeq" id="WP_011102363.1">
    <property type="nucleotide sequence ID" value="NC_004572.3"/>
</dbReference>
<dbReference type="SMR" id="Q83GW1"/>
<dbReference type="STRING" id="203267.TWT_120"/>
<dbReference type="KEGG" id="twh:TWT_120"/>
<dbReference type="eggNOG" id="COG0050">
    <property type="taxonomic scope" value="Bacteria"/>
</dbReference>
<dbReference type="HOGENOM" id="CLU_007265_0_1_11"/>
<dbReference type="OrthoDB" id="9803139at2"/>
<dbReference type="Proteomes" id="UP000002200">
    <property type="component" value="Chromosome"/>
</dbReference>
<dbReference type="GO" id="GO:0005829">
    <property type="term" value="C:cytosol"/>
    <property type="evidence" value="ECO:0007669"/>
    <property type="project" value="TreeGrafter"/>
</dbReference>
<dbReference type="GO" id="GO:0005525">
    <property type="term" value="F:GTP binding"/>
    <property type="evidence" value="ECO:0007669"/>
    <property type="project" value="UniProtKB-UniRule"/>
</dbReference>
<dbReference type="GO" id="GO:0003924">
    <property type="term" value="F:GTPase activity"/>
    <property type="evidence" value="ECO:0007669"/>
    <property type="project" value="InterPro"/>
</dbReference>
<dbReference type="GO" id="GO:0003746">
    <property type="term" value="F:translation elongation factor activity"/>
    <property type="evidence" value="ECO:0007669"/>
    <property type="project" value="UniProtKB-UniRule"/>
</dbReference>
<dbReference type="CDD" id="cd01884">
    <property type="entry name" value="EF_Tu"/>
    <property type="match status" value="1"/>
</dbReference>
<dbReference type="CDD" id="cd03697">
    <property type="entry name" value="EFTU_II"/>
    <property type="match status" value="1"/>
</dbReference>
<dbReference type="CDD" id="cd03707">
    <property type="entry name" value="EFTU_III"/>
    <property type="match status" value="1"/>
</dbReference>
<dbReference type="FunFam" id="2.40.30.10:FF:000001">
    <property type="entry name" value="Elongation factor Tu"/>
    <property type="match status" value="1"/>
</dbReference>
<dbReference type="FunFam" id="3.40.50.300:FF:000003">
    <property type="entry name" value="Elongation factor Tu"/>
    <property type="match status" value="1"/>
</dbReference>
<dbReference type="Gene3D" id="3.40.50.300">
    <property type="entry name" value="P-loop containing nucleotide triphosphate hydrolases"/>
    <property type="match status" value="1"/>
</dbReference>
<dbReference type="Gene3D" id="2.40.30.10">
    <property type="entry name" value="Translation factors"/>
    <property type="match status" value="2"/>
</dbReference>
<dbReference type="HAMAP" id="MF_00118_B">
    <property type="entry name" value="EF_Tu_B"/>
    <property type="match status" value="1"/>
</dbReference>
<dbReference type="InterPro" id="IPR041709">
    <property type="entry name" value="EF-Tu_GTP-bd"/>
</dbReference>
<dbReference type="InterPro" id="IPR050055">
    <property type="entry name" value="EF-Tu_GTPase"/>
</dbReference>
<dbReference type="InterPro" id="IPR004161">
    <property type="entry name" value="EFTu-like_2"/>
</dbReference>
<dbReference type="InterPro" id="IPR033720">
    <property type="entry name" value="EFTU_2"/>
</dbReference>
<dbReference type="InterPro" id="IPR031157">
    <property type="entry name" value="G_TR_CS"/>
</dbReference>
<dbReference type="InterPro" id="IPR027417">
    <property type="entry name" value="P-loop_NTPase"/>
</dbReference>
<dbReference type="InterPro" id="IPR005225">
    <property type="entry name" value="Small_GTP-bd"/>
</dbReference>
<dbReference type="InterPro" id="IPR000795">
    <property type="entry name" value="T_Tr_GTP-bd_dom"/>
</dbReference>
<dbReference type="InterPro" id="IPR009000">
    <property type="entry name" value="Transl_B-barrel_sf"/>
</dbReference>
<dbReference type="InterPro" id="IPR009001">
    <property type="entry name" value="Transl_elong_EF1A/Init_IF2_C"/>
</dbReference>
<dbReference type="InterPro" id="IPR004541">
    <property type="entry name" value="Transl_elong_EFTu/EF1A_bac/org"/>
</dbReference>
<dbReference type="InterPro" id="IPR004160">
    <property type="entry name" value="Transl_elong_EFTu/EF1A_C"/>
</dbReference>
<dbReference type="NCBIfam" id="TIGR00485">
    <property type="entry name" value="EF-Tu"/>
    <property type="match status" value="1"/>
</dbReference>
<dbReference type="NCBIfam" id="NF000766">
    <property type="entry name" value="PRK00049.1"/>
    <property type="match status" value="1"/>
</dbReference>
<dbReference type="NCBIfam" id="NF009372">
    <property type="entry name" value="PRK12735.1"/>
    <property type="match status" value="1"/>
</dbReference>
<dbReference type="NCBIfam" id="NF009373">
    <property type="entry name" value="PRK12736.1"/>
    <property type="match status" value="1"/>
</dbReference>
<dbReference type="NCBIfam" id="TIGR00231">
    <property type="entry name" value="small_GTP"/>
    <property type="match status" value="1"/>
</dbReference>
<dbReference type="PANTHER" id="PTHR43721:SF22">
    <property type="entry name" value="ELONGATION FACTOR TU, MITOCHONDRIAL"/>
    <property type="match status" value="1"/>
</dbReference>
<dbReference type="PANTHER" id="PTHR43721">
    <property type="entry name" value="ELONGATION FACTOR TU-RELATED"/>
    <property type="match status" value="1"/>
</dbReference>
<dbReference type="Pfam" id="PF00009">
    <property type="entry name" value="GTP_EFTU"/>
    <property type="match status" value="1"/>
</dbReference>
<dbReference type="Pfam" id="PF03144">
    <property type="entry name" value="GTP_EFTU_D2"/>
    <property type="match status" value="1"/>
</dbReference>
<dbReference type="Pfam" id="PF03143">
    <property type="entry name" value="GTP_EFTU_D3"/>
    <property type="match status" value="1"/>
</dbReference>
<dbReference type="PRINTS" id="PR00315">
    <property type="entry name" value="ELONGATNFCT"/>
</dbReference>
<dbReference type="SUPFAM" id="SSF50465">
    <property type="entry name" value="EF-Tu/eEF-1alpha/eIF2-gamma C-terminal domain"/>
    <property type="match status" value="1"/>
</dbReference>
<dbReference type="SUPFAM" id="SSF52540">
    <property type="entry name" value="P-loop containing nucleoside triphosphate hydrolases"/>
    <property type="match status" value="1"/>
</dbReference>
<dbReference type="SUPFAM" id="SSF50447">
    <property type="entry name" value="Translation proteins"/>
    <property type="match status" value="1"/>
</dbReference>
<dbReference type="PROSITE" id="PS00301">
    <property type="entry name" value="G_TR_1"/>
    <property type="match status" value="1"/>
</dbReference>
<dbReference type="PROSITE" id="PS51722">
    <property type="entry name" value="G_TR_2"/>
    <property type="match status" value="1"/>
</dbReference>
<sequence>MAKAKFERTKPHVNIGTIGHVDHGKTTLTAAISRVLSERLPSNTNVKQDFDAIDSAPEERQRGITINISHIEYETEKRHYAHVDAPGHADYIKNMITGAAQMDGAILVVAATDGAMAQTREHVLLAKQVGVPYLLVALNKADMVSDEEILELVELEVRELLSNHGFDGENVPVVRVSGLKALEGDQKWGDAVMELMKAVDESIPDPVRDRDKPFLMPIEDVFTITGRGTVVTGRAERGVLAVNSEVEIVGIRPTQKTTVTGIEMFRKQLDEAWAGENCGLLLRGTKREDVERGQVVVKPGSVTPHTKFEGKAYILSKDEGGRHNPFYSNYRPQFYFRTTDVTGVITLPEGTEMVMPGDTISITVDLIQPIAMEEGLGFAIREGGRTVGAGTVVKILE</sequence>
<comment type="function">
    <text evidence="2">GTP hydrolase that promotes the GTP-dependent binding of aminoacyl-tRNA to the A-site of ribosomes during protein biosynthesis.</text>
</comment>
<comment type="catalytic activity">
    <reaction evidence="2">
        <text>GTP + H2O = GDP + phosphate + H(+)</text>
        <dbReference type="Rhea" id="RHEA:19669"/>
        <dbReference type="ChEBI" id="CHEBI:15377"/>
        <dbReference type="ChEBI" id="CHEBI:15378"/>
        <dbReference type="ChEBI" id="CHEBI:37565"/>
        <dbReference type="ChEBI" id="CHEBI:43474"/>
        <dbReference type="ChEBI" id="CHEBI:58189"/>
        <dbReference type="EC" id="3.6.5.3"/>
    </reaction>
    <physiologicalReaction direction="left-to-right" evidence="2">
        <dbReference type="Rhea" id="RHEA:19670"/>
    </physiologicalReaction>
</comment>
<comment type="subunit">
    <text evidence="2">Monomer.</text>
</comment>
<comment type="subcellular location">
    <subcellularLocation>
        <location evidence="2">Cytoplasm</location>
    </subcellularLocation>
</comment>
<comment type="similarity">
    <text evidence="2">Belongs to the TRAFAC class translation factor GTPase superfamily. Classic translation factor GTPase family. EF-Tu/EF-1A subfamily.</text>
</comment>
<organism>
    <name type="scientific">Tropheryma whipplei (strain Twist)</name>
    <name type="common">Whipple's bacillus</name>
    <dbReference type="NCBI Taxonomy" id="203267"/>
    <lineage>
        <taxon>Bacteria</taxon>
        <taxon>Bacillati</taxon>
        <taxon>Actinomycetota</taxon>
        <taxon>Actinomycetes</taxon>
        <taxon>Micrococcales</taxon>
        <taxon>Tropherymataceae</taxon>
        <taxon>Tropheryma</taxon>
    </lineage>
</organism>
<name>EFTU_TROWT</name>
<accession>Q83GW1</accession>
<keyword id="KW-0963">Cytoplasm</keyword>
<keyword id="KW-0251">Elongation factor</keyword>
<keyword id="KW-0342">GTP-binding</keyword>
<keyword id="KW-0378">Hydrolase</keyword>
<keyword id="KW-0460">Magnesium</keyword>
<keyword id="KW-0479">Metal-binding</keyword>
<keyword id="KW-0547">Nucleotide-binding</keyword>
<keyword id="KW-0648">Protein biosynthesis</keyword>
<keyword id="KW-1185">Reference proteome</keyword>
<feature type="chain" id="PRO_1000015783" description="Elongation factor Tu">
    <location>
        <begin position="1"/>
        <end position="397"/>
    </location>
</feature>
<feature type="domain" description="tr-type G">
    <location>
        <begin position="10"/>
        <end position="207"/>
    </location>
</feature>
<feature type="region of interest" description="G1" evidence="1">
    <location>
        <begin position="19"/>
        <end position="26"/>
    </location>
</feature>
<feature type="region of interest" description="G2" evidence="1">
    <location>
        <begin position="63"/>
        <end position="67"/>
    </location>
</feature>
<feature type="region of interest" description="G3" evidence="1">
    <location>
        <begin position="84"/>
        <end position="87"/>
    </location>
</feature>
<feature type="region of interest" description="G4" evidence="1">
    <location>
        <begin position="139"/>
        <end position="142"/>
    </location>
</feature>
<feature type="region of interest" description="G5" evidence="1">
    <location>
        <begin position="177"/>
        <end position="179"/>
    </location>
</feature>
<feature type="binding site" evidence="2">
    <location>
        <begin position="19"/>
        <end position="26"/>
    </location>
    <ligand>
        <name>GTP</name>
        <dbReference type="ChEBI" id="CHEBI:37565"/>
    </ligand>
</feature>
<feature type="binding site" evidence="2">
    <location>
        <position position="26"/>
    </location>
    <ligand>
        <name>Mg(2+)</name>
        <dbReference type="ChEBI" id="CHEBI:18420"/>
    </ligand>
</feature>
<feature type="binding site" evidence="2">
    <location>
        <begin position="84"/>
        <end position="88"/>
    </location>
    <ligand>
        <name>GTP</name>
        <dbReference type="ChEBI" id="CHEBI:37565"/>
    </ligand>
</feature>
<feature type="binding site" evidence="2">
    <location>
        <begin position="139"/>
        <end position="142"/>
    </location>
    <ligand>
        <name>GTP</name>
        <dbReference type="ChEBI" id="CHEBI:37565"/>
    </ligand>
</feature>
<proteinExistence type="inferred from homology"/>
<evidence type="ECO:0000250" key="1"/>
<evidence type="ECO:0000255" key="2">
    <source>
        <dbReference type="HAMAP-Rule" id="MF_00118"/>
    </source>
</evidence>